<organism>
    <name type="scientific">Thermococcus sp. (strain GE8)</name>
    <dbReference type="NCBI Taxonomy" id="105583"/>
    <lineage>
        <taxon>Archaea</taxon>
        <taxon>Methanobacteriati</taxon>
        <taxon>Methanobacteriota</taxon>
        <taxon>Thermococci</taxon>
        <taxon>Thermococcales</taxon>
        <taxon>Thermococcaceae</taxon>
        <taxon>Thermococcus</taxon>
    </lineage>
</organism>
<feature type="chain" id="PRO_0000007343" description="DNA polymerase, 1st part">
    <location>
        <begin position="1"/>
        <end position="491"/>
    </location>
</feature>
<feature type="chain" id="PRO_0000007344" description="Endonuclease PI-TspGE8I">
    <location>
        <begin position="492"/>
        <end position="1026"/>
    </location>
</feature>
<feature type="chain" id="PRO_0000007345" description="DNA polymerase, 2nd part">
    <location>
        <begin position="1027"/>
        <end position="1075"/>
    </location>
</feature>
<feature type="chain" id="PRO_0000007346" description="Endonuclease PI-TspGE8II">
    <location>
        <begin position="1076"/>
        <end position="1464"/>
    </location>
</feature>
<feature type="chain" id="PRO_0000007347" description="DNA polymerase, 3rd part">
    <location>
        <begin position="1465"/>
        <end position="1699"/>
    </location>
</feature>
<feature type="domain" description="DOD-type homing endonuclease 1" evidence="2">
    <location>
        <begin position="770"/>
        <end position="903"/>
    </location>
</feature>
<feature type="domain" description="DOD-type homing endonuclease 2" evidence="2">
    <location>
        <begin position="1222"/>
        <end position="1361"/>
    </location>
</feature>
<sequence length="1699" mass="197325">MILDTDYITEDGKPVIRVFKKENGEFKIEYDRNFEPYFYALLKDDSAIEEVKKITAKRHGTVVKVKRAEKVKKKFLGRPIEVWKLYFTHPQDVPAIRDKIREHPAVIDIYEYDIPFAKRYLIDKGLIPMEGDEKLKMLAFDIETLYHEGEEFAEGPILMISYADEEGARVITWKKVDLPYVDVVSTEKEMIKRFLRVVKEKDPDVLITYNGDNFDFAYLKRRSEKLGVKFILGRDGSEPKIQRMGDRFAVEVKGRIHFDLYPVIRRTINLPTYTLEAVYEAIFGKPKEKVYAEEIATAWETGEGLERVARYSMEDAKVTFELGKEFFPMEAQLSRLIGQSLWDVSRSSTGNLVEWFLLRKAYERNELAPNKPDERELARRRQSYAGGYVKEPERGLWNNIVYLDFRSLYPSIIITHNVSPDTLNREGCKEYDVAPQVGHKFCKDFPGFIPSLLGDLLEERQKIKRKMRATIDPVEKKLLDYRQRAIKILANSILPDEWLPLLVNGRLKLVRIGDFVDNTMKKGQPLENDGTEVLEVSGIEAISFNRKTKIAEIKPVKALIRHRYRGKVYDIKLSSGRNIKVTEGHSLFAFRDGELVEVTGGEIKPGDFIAVPRRVNLPERHERINLIEILLGLPPEETSDIVLTIPVKGRKNFFKGMLRTLRWIFEEEQRPRTARRYLEHLQKLGYVKLMKRAYEIVNKEALRNYRKLYEVLAERVKYNGNKREYLVHFNDLRNEIKFMPDEELEEWKVGTLNGFRMEPFIEVGEDFAKLLGYYVSEGYARKQRNQKNGWSYSVKIYNNDQRVLDDMEKLASKFFGRVRRGKNYVEISRKMAYVLFESLCGTLAENKRVPEVIFTSPESVRWAFFEGYFIGDGDLHPSKRVRLSTKSEELVNGLVVLLNSLGISAIKIRFDSGVYRVLVNEELPFLGNRKRKNAYYSHVIPKEILEETFGKQFQKNMSPAKLNEKVEKGELDAGKARRIAWLLEGDIVLDRVEKVTVEDYEGYVYDLSVEENENFLAGFGMLYAHNSYYGYYGYAKARWYCRECAESVTAWGRSYIETTIREIEEKFGFKVLYADSVAGNTEVIIRRNGKVEFVPIEKLFQRVDYRIGEKEYCALEGVEALTLDNRGRLVWRKVPYIMRHKTNKKIYRVWFTNSWYLDVTEDHSLIGYLNTSKVKSEKPLKERLVEVKPRELGEKVKSLITLNRAIARSIKANPIAVRLWELIGLLVGDGNWGGHSKWAKYYVGLSCGLDKAEIEEKVLRPLKEAGIISNYYGKSKKGDVSILSKWLAGFMVKYFKDENGNKRIPSFMFNLPREYIEAFLRGLFSADGTVSLRRGIPEIRLTSVNRELSNEVRKLLWLVGVSNSMFTETTPNKYLGNESGTRSIHVRIKNKHRFAKRIGFLLDRKATKLSDNLREHTNKKMAYRYDFDLVYPKKIEEINYDRYVYDIEVEGTHRFFANGILVHNTDGFFATIPGADAETVKKKAMEFLKYINAKLPGLLELEYEGFYVRGFFVTKKKYAVIDEEGKITTRGLEIVRRDWSEIAKETQARVLEAILKHGDVEEAVRIVKEVTEKLSKYEVPPEKLVIHEQITRDLKDYKATGPHVAVAKRLAARGIKIRPGTVISYIVLKGSGRIGDRAIPFDEFDPAKHKYDAEYYIENQVLPAVERILRAFGYRKEDLRYQKTKQVGLGAWLKVKGKK</sequence>
<gene>
    <name type="primary">pol</name>
    <name type="synonym">pol-1</name>
</gene>
<accession>Q9HH84</accession>
<dbReference type="EC" id="2.7.7.7"/>
<dbReference type="EC" id="3.1.-.-"/>
<dbReference type="EMBL" id="AJ250333">
    <property type="protein sequence ID" value="CAC12850.1"/>
    <property type="molecule type" value="Genomic_DNA"/>
</dbReference>
<dbReference type="SMR" id="Q9HH84"/>
<dbReference type="GO" id="GO:0003677">
    <property type="term" value="F:DNA binding"/>
    <property type="evidence" value="ECO:0007669"/>
    <property type="project" value="UniProtKB-KW"/>
</dbReference>
<dbReference type="GO" id="GO:0003887">
    <property type="term" value="F:DNA-directed DNA polymerase activity"/>
    <property type="evidence" value="ECO:0007669"/>
    <property type="project" value="UniProtKB-KW"/>
</dbReference>
<dbReference type="GO" id="GO:0004519">
    <property type="term" value="F:endonuclease activity"/>
    <property type="evidence" value="ECO:0007669"/>
    <property type="project" value="UniProtKB-KW"/>
</dbReference>
<dbReference type="GO" id="GO:0004527">
    <property type="term" value="F:exonuclease activity"/>
    <property type="evidence" value="ECO:0007669"/>
    <property type="project" value="UniProtKB-KW"/>
</dbReference>
<dbReference type="GO" id="GO:0000166">
    <property type="term" value="F:nucleotide binding"/>
    <property type="evidence" value="ECO:0007669"/>
    <property type="project" value="InterPro"/>
</dbReference>
<dbReference type="GO" id="GO:0006261">
    <property type="term" value="P:DNA-templated DNA replication"/>
    <property type="evidence" value="ECO:0007669"/>
    <property type="project" value="TreeGrafter"/>
</dbReference>
<dbReference type="GO" id="GO:0016539">
    <property type="term" value="P:intein-mediated protein splicing"/>
    <property type="evidence" value="ECO:0007669"/>
    <property type="project" value="InterPro"/>
</dbReference>
<dbReference type="GO" id="GO:0006314">
    <property type="term" value="P:intron homing"/>
    <property type="evidence" value="ECO:0007669"/>
    <property type="project" value="UniProtKB-KW"/>
</dbReference>
<dbReference type="CDD" id="cd05780">
    <property type="entry name" value="DNA_polB_Kod1_like_exo"/>
    <property type="match status" value="1"/>
</dbReference>
<dbReference type="CDD" id="cd00081">
    <property type="entry name" value="Hint"/>
    <property type="match status" value="4"/>
</dbReference>
<dbReference type="FunFam" id="3.30.342.10:FF:000015">
    <property type="entry name" value="DNA polymerase"/>
    <property type="match status" value="1"/>
</dbReference>
<dbReference type="FunFam" id="1.10.132.60:FF:000013">
    <property type="entry name" value="DNA polymerase Pol2"/>
    <property type="match status" value="1"/>
</dbReference>
<dbReference type="Gene3D" id="1.10.132.60">
    <property type="entry name" value="DNA polymerase family B, C-terminal domain"/>
    <property type="match status" value="1"/>
</dbReference>
<dbReference type="Gene3D" id="3.30.342.10">
    <property type="entry name" value="DNA Polymerase, chain B, domain 1"/>
    <property type="match status" value="1"/>
</dbReference>
<dbReference type="Gene3D" id="2.170.16.10">
    <property type="entry name" value="Hedgehog/Intein (Hint) domain"/>
    <property type="match status" value="3"/>
</dbReference>
<dbReference type="Gene3D" id="1.10.287.690">
    <property type="entry name" value="Helix hairpin bin"/>
    <property type="match status" value="1"/>
</dbReference>
<dbReference type="Gene3D" id="3.10.28.10">
    <property type="entry name" value="Homing endonucleases"/>
    <property type="match status" value="2"/>
</dbReference>
<dbReference type="Gene3D" id="1.10.8.1330">
    <property type="entry name" value="Intein homing endonuclease, domain III"/>
    <property type="match status" value="1"/>
</dbReference>
<dbReference type="Gene3D" id="1.10.10.1010">
    <property type="entry name" value="Intein homing endonuclease, domain IV"/>
    <property type="match status" value="1"/>
</dbReference>
<dbReference type="Gene3D" id="3.90.1600.10">
    <property type="entry name" value="Palm domain of DNA polymerase"/>
    <property type="match status" value="3"/>
</dbReference>
<dbReference type="Gene3D" id="3.30.420.10">
    <property type="entry name" value="Ribonuclease H-like superfamily/Ribonuclease H"/>
    <property type="match status" value="1"/>
</dbReference>
<dbReference type="InterPro" id="IPR006172">
    <property type="entry name" value="DNA-dir_DNA_pol_B"/>
</dbReference>
<dbReference type="InterPro" id="IPR006133">
    <property type="entry name" value="DNA-dir_DNA_pol_B_exonuc"/>
</dbReference>
<dbReference type="InterPro" id="IPR006134">
    <property type="entry name" value="DNA-dir_DNA_pol_B_multi_dom"/>
</dbReference>
<dbReference type="InterPro" id="IPR043502">
    <property type="entry name" value="DNA/RNA_pol_sf"/>
</dbReference>
<dbReference type="InterPro" id="IPR042087">
    <property type="entry name" value="DNA_pol_B_thumb"/>
</dbReference>
<dbReference type="InterPro" id="IPR023211">
    <property type="entry name" value="DNA_pol_palm_dom_sf"/>
</dbReference>
<dbReference type="InterPro" id="IPR050240">
    <property type="entry name" value="DNA_pol_type-B"/>
</dbReference>
<dbReference type="InterPro" id="IPR003586">
    <property type="entry name" value="Hint_dom_C"/>
</dbReference>
<dbReference type="InterPro" id="IPR003587">
    <property type="entry name" value="Hint_dom_N"/>
</dbReference>
<dbReference type="InterPro" id="IPR036844">
    <property type="entry name" value="Hint_dom_sf"/>
</dbReference>
<dbReference type="InterPro" id="IPR027434">
    <property type="entry name" value="Homing_endonucl"/>
</dbReference>
<dbReference type="InterPro" id="IPR006142">
    <property type="entry name" value="INTEIN"/>
</dbReference>
<dbReference type="InterPro" id="IPR030934">
    <property type="entry name" value="Intein_C"/>
</dbReference>
<dbReference type="InterPro" id="IPR004042">
    <property type="entry name" value="Intein_endonuc_central"/>
</dbReference>
<dbReference type="InterPro" id="IPR006141">
    <property type="entry name" value="Intein_N"/>
</dbReference>
<dbReference type="InterPro" id="IPR004860">
    <property type="entry name" value="LAGLIDADG_dom"/>
</dbReference>
<dbReference type="InterPro" id="IPR041005">
    <property type="entry name" value="PI-TkoII_IV"/>
</dbReference>
<dbReference type="InterPro" id="IPR012337">
    <property type="entry name" value="RNaseH-like_sf"/>
</dbReference>
<dbReference type="InterPro" id="IPR036397">
    <property type="entry name" value="RNaseH_sf"/>
</dbReference>
<dbReference type="NCBIfam" id="TIGR01443">
    <property type="entry name" value="intein_Cterm"/>
    <property type="match status" value="2"/>
</dbReference>
<dbReference type="NCBIfam" id="TIGR01445">
    <property type="entry name" value="intein_Nterm"/>
    <property type="match status" value="2"/>
</dbReference>
<dbReference type="NCBIfam" id="TIGR00592">
    <property type="entry name" value="pol2"/>
    <property type="match status" value="2"/>
</dbReference>
<dbReference type="PANTHER" id="PTHR10322">
    <property type="entry name" value="DNA POLYMERASE CATALYTIC SUBUNIT"/>
    <property type="match status" value="1"/>
</dbReference>
<dbReference type="PANTHER" id="PTHR10322:SF23">
    <property type="entry name" value="DNA POLYMERASE DELTA CATALYTIC SUBUNIT"/>
    <property type="match status" value="1"/>
</dbReference>
<dbReference type="Pfam" id="PF00136">
    <property type="entry name" value="DNA_pol_B"/>
    <property type="match status" value="3"/>
</dbReference>
<dbReference type="Pfam" id="PF03104">
    <property type="entry name" value="DNA_pol_B_exo1"/>
    <property type="match status" value="1"/>
</dbReference>
<dbReference type="Pfam" id="PF14890">
    <property type="entry name" value="Intein_splicing"/>
    <property type="match status" value="2"/>
</dbReference>
<dbReference type="Pfam" id="PF14528">
    <property type="entry name" value="LAGLIDADG_3"/>
    <property type="match status" value="2"/>
</dbReference>
<dbReference type="Pfam" id="PF18714">
    <property type="entry name" value="PI-TkoII_IV"/>
    <property type="match status" value="1"/>
</dbReference>
<dbReference type="PRINTS" id="PR00379">
    <property type="entry name" value="INTEIN"/>
</dbReference>
<dbReference type="SMART" id="SM00305">
    <property type="entry name" value="HintC"/>
    <property type="match status" value="2"/>
</dbReference>
<dbReference type="SMART" id="SM00306">
    <property type="entry name" value="HintN"/>
    <property type="match status" value="2"/>
</dbReference>
<dbReference type="SMART" id="SM00486">
    <property type="entry name" value="POLBc"/>
    <property type="match status" value="1"/>
</dbReference>
<dbReference type="SUPFAM" id="SSF56672">
    <property type="entry name" value="DNA/RNA polymerases"/>
    <property type="match status" value="2"/>
</dbReference>
<dbReference type="SUPFAM" id="SSF51294">
    <property type="entry name" value="Hedgehog/intein (Hint) domain"/>
    <property type="match status" value="2"/>
</dbReference>
<dbReference type="SUPFAM" id="SSF55608">
    <property type="entry name" value="Homing endonucleases"/>
    <property type="match status" value="2"/>
</dbReference>
<dbReference type="SUPFAM" id="SSF53098">
    <property type="entry name" value="Ribonuclease H-like"/>
    <property type="match status" value="1"/>
</dbReference>
<dbReference type="PROSITE" id="PS50818">
    <property type="entry name" value="INTEIN_C_TER"/>
    <property type="match status" value="2"/>
</dbReference>
<dbReference type="PROSITE" id="PS50819">
    <property type="entry name" value="INTEIN_ENDONUCLEASE"/>
    <property type="match status" value="2"/>
</dbReference>
<dbReference type="PROSITE" id="PS50817">
    <property type="entry name" value="INTEIN_N_TER"/>
    <property type="match status" value="2"/>
</dbReference>
<reference key="1">
    <citation type="submission" date="1999-10" db="EMBL/GenBank/DDBJ databases">
        <title>Thermococcales taxonomy and phylogeny based on the comparative use of 16S rDNA, 16S-23S rDNA intergenic spacer and family B DNA polymerase genes.</title>
        <authorList>
            <person name="Querellou J.J.E."/>
            <person name="Cambon M.A."/>
            <person name="Lesongeur F."/>
            <person name="Barbier G."/>
        </authorList>
    </citation>
    <scope>NUCLEOTIDE SEQUENCE [GENOMIC DNA]</scope>
</reference>
<evidence type="ECO:0000250" key="1"/>
<evidence type="ECO:0000255" key="2">
    <source>
        <dbReference type="PROSITE-ProRule" id="PRU00273"/>
    </source>
</evidence>
<evidence type="ECO:0000305" key="3"/>
<keyword id="KW-0068">Autocatalytic cleavage</keyword>
<keyword id="KW-0235">DNA replication</keyword>
<keyword id="KW-0238">DNA-binding</keyword>
<keyword id="KW-0239">DNA-directed DNA polymerase</keyword>
<keyword id="KW-0255">Endonuclease</keyword>
<keyword id="KW-0269">Exonuclease</keyword>
<keyword id="KW-0378">Hydrolase</keyword>
<keyword id="KW-0404">Intron homing</keyword>
<keyword id="KW-0511">Multifunctional enzyme</keyword>
<keyword id="KW-0540">Nuclease</keyword>
<keyword id="KW-0548">Nucleotidyltransferase</keyword>
<keyword id="KW-0651">Protein splicing</keyword>
<keyword id="KW-0677">Repeat</keyword>
<keyword id="KW-0808">Transferase</keyword>
<comment type="function">
    <text evidence="1">In addition to polymerase activity, this DNA polymerase exhibits 3' to 5' exonuclease activity.</text>
</comment>
<comment type="function">
    <text evidence="3">PI-TspGE8I and PI-TspGE8II are endonucleases.</text>
</comment>
<comment type="catalytic activity">
    <reaction>
        <text>DNA(n) + a 2'-deoxyribonucleoside 5'-triphosphate = DNA(n+1) + diphosphate</text>
        <dbReference type="Rhea" id="RHEA:22508"/>
        <dbReference type="Rhea" id="RHEA-COMP:17339"/>
        <dbReference type="Rhea" id="RHEA-COMP:17340"/>
        <dbReference type="ChEBI" id="CHEBI:33019"/>
        <dbReference type="ChEBI" id="CHEBI:61560"/>
        <dbReference type="ChEBI" id="CHEBI:173112"/>
        <dbReference type="EC" id="2.7.7.7"/>
    </reaction>
</comment>
<comment type="PTM">
    <text>This protein undergoes a protein self splicing that involves a post-translational excision of the intervening region (intein) followed by peptide ligation.</text>
</comment>
<comment type="similarity">
    <text evidence="3">Belongs to the DNA polymerase type-B family.</text>
</comment>
<name>DPOL_THEG8</name>
<proteinExistence type="inferred from homology"/>
<protein>
    <recommendedName>
        <fullName>DNA polymerase</fullName>
        <ecNumber>2.7.7.7</ecNumber>
    </recommendedName>
    <component>
        <recommendedName>
            <fullName>Endonuclease PI-TspGE8I</fullName>
            <ecNumber>3.1.-.-</ecNumber>
        </recommendedName>
        <alternativeName>
            <fullName>Tsp-GE8 pol-1 intein</fullName>
        </alternativeName>
    </component>
    <component>
        <recommendedName>
            <fullName>Endonuclease PI-TspGE8II</fullName>
            <ecNumber>3.1.-.-</ecNumber>
        </recommendedName>
        <alternativeName>
            <fullName>Tsp-GE8 pol-2 intein</fullName>
        </alternativeName>
    </component>
</protein>